<reference key="1">
    <citation type="journal article" date="2002" name="Nature">
        <title>Sequence and analysis of rice chromosome 4.</title>
        <authorList>
            <person name="Feng Q."/>
            <person name="Zhang Y."/>
            <person name="Hao P."/>
            <person name="Wang S."/>
            <person name="Fu G."/>
            <person name="Huang Y."/>
            <person name="Li Y."/>
            <person name="Zhu J."/>
            <person name="Liu Y."/>
            <person name="Hu X."/>
            <person name="Jia P."/>
            <person name="Zhang Y."/>
            <person name="Zhao Q."/>
            <person name="Ying K."/>
            <person name="Yu S."/>
            <person name="Tang Y."/>
            <person name="Weng Q."/>
            <person name="Zhang L."/>
            <person name="Lu Y."/>
            <person name="Mu J."/>
            <person name="Lu Y."/>
            <person name="Zhang L.S."/>
            <person name="Yu Z."/>
            <person name="Fan D."/>
            <person name="Liu X."/>
            <person name="Lu T."/>
            <person name="Li C."/>
            <person name="Wu Y."/>
            <person name="Sun T."/>
            <person name="Lei H."/>
            <person name="Li T."/>
            <person name="Hu H."/>
            <person name="Guan J."/>
            <person name="Wu M."/>
            <person name="Zhang R."/>
            <person name="Zhou B."/>
            <person name="Chen Z."/>
            <person name="Chen L."/>
            <person name="Jin Z."/>
            <person name="Wang R."/>
            <person name="Yin H."/>
            <person name="Cai Z."/>
            <person name="Ren S."/>
            <person name="Lv G."/>
            <person name="Gu W."/>
            <person name="Zhu G."/>
            <person name="Tu Y."/>
            <person name="Jia J."/>
            <person name="Zhang Y."/>
            <person name="Chen J."/>
            <person name="Kang H."/>
            <person name="Chen X."/>
            <person name="Shao C."/>
            <person name="Sun Y."/>
            <person name="Hu Q."/>
            <person name="Zhang X."/>
            <person name="Zhang W."/>
            <person name="Wang L."/>
            <person name="Ding C."/>
            <person name="Sheng H."/>
            <person name="Gu J."/>
            <person name="Chen S."/>
            <person name="Ni L."/>
            <person name="Zhu F."/>
            <person name="Chen W."/>
            <person name="Lan L."/>
            <person name="Lai Y."/>
            <person name="Cheng Z."/>
            <person name="Gu M."/>
            <person name="Jiang J."/>
            <person name="Li J."/>
            <person name="Hong G."/>
            <person name="Xue Y."/>
            <person name="Han B."/>
        </authorList>
    </citation>
    <scope>NUCLEOTIDE SEQUENCE [LARGE SCALE GENOMIC DNA]</scope>
    <source>
        <strain>cv. Nipponbare</strain>
    </source>
</reference>
<reference key="2">
    <citation type="journal article" date="2005" name="Nature">
        <title>The map-based sequence of the rice genome.</title>
        <authorList>
            <consortium name="International rice genome sequencing project (IRGSP)"/>
        </authorList>
    </citation>
    <scope>NUCLEOTIDE SEQUENCE [LARGE SCALE GENOMIC DNA]</scope>
    <source>
        <strain>cv. Nipponbare</strain>
    </source>
</reference>
<reference key="3">
    <citation type="journal article" date="2008" name="Nucleic Acids Res.">
        <title>The rice annotation project database (RAP-DB): 2008 update.</title>
        <authorList>
            <consortium name="The rice annotation project (RAP)"/>
        </authorList>
    </citation>
    <scope>GENOME REANNOTATION</scope>
    <source>
        <strain>cv. Nipponbare</strain>
    </source>
</reference>
<reference key="4">
    <citation type="journal article" date="2013" name="Rice">
        <title>Improvement of the Oryza sativa Nipponbare reference genome using next generation sequence and optical map data.</title>
        <authorList>
            <person name="Kawahara Y."/>
            <person name="de la Bastide M."/>
            <person name="Hamilton J.P."/>
            <person name="Kanamori H."/>
            <person name="McCombie W.R."/>
            <person name="Ouyang S."/>
            <person name="Schwartz D.C."/>
            <person name="Tanaka T."/>
            <person name="Wu J."/>
            <person name="Zhou S."/>
            <person name="Childs K.L."/>
            <person name="Davidson R.M."/>
            <person name="Lin H."/>
            <person name="Quesada-Ocampo L."/>
            <person name="Vaillancourt B."/>
            <person name="Sakai H."/>
            <person name="Lee S.S."/>
            <person name="Kim J."/>
            <person name="Numa H."/>
            <person name="Itoh T."/>
            <person name="Buell C.R."/>
            <person name="Matsumoto T."/>
        </authorList>
    </citation>
    <scope>GENOME REANNOTATION</scope>
    <source>
        <strain>cv. Nipponbare</strain>
    </source>
</reference>
<reference key="5">
    <citation type="journal article" date="2005" name="PLoS Biol.">
        <title>The genomes of Oryza sativa: a history of duplications.</title>
        <authorList>
            <person name="Yu J."/>
            <person name="Wang J."/>
            <person name="Lin W."/>
            <person name="Li S."/>
            <person name="Li H."/>
            <person name="Zhou J."/>
            <person name="Ni P."/>
            <person name="Dong W."/>
            <person name="Hu S."/>
            <person name="Zeng C."/>
            <person name="Zhang J."/>
            <person name="Zhang Y."/>
            <person name="Li R."/>
            <person name="Xu Z."/>
            <person name="Li S."/>
            <person name="Li X."/>
            <person name="Zheng H."/>
            <person name="Cong L."/>
            <person name="Lin L."/>
            <person name="Yin J."/>
            <person name="Geng J."/>
            <person name="Li G."/>
            <person name="Shi J."/>
            <person name="Liu J."/>
            <person name="Lv H."/>
            <person name="Li J."/>
            <person name="Wang J."/>
            <person name="Deng Y."/>
            <person name="Ran L."/>
            <person name="Shi X."/>
            <person name="Wang X."/>
            <person name="Wu Q."/>
            <person name="Li C."/>
            <person name="Ren X."/>
            <person name="Wang J."/>
            <person name="Wang X."/>
            <person name="Li D."/>
            <person name="Liu D."/>
            <person name="Zhang X."/>
            <person name="Ji Z."/>
            <person name="Zhao W."/>
            <person name="Sun Y."/>
            <person name="Zhang Z."/>
            <person name="Bao J."/>
            <person name="Han Y."/>
            <person name="Dong L."/>
            <person name="Ji J."/>
            <person name="Chen P."/>
            <person name="Wu S."/>
            <person name="Liu J."/>
            <person name="Xiao Y."/>
            <person name="Bu D."/>
            <person name="Tan J."/>
            <person name="Yang L."/>
            <person name="Ye C."/>
            <person name="Zhang J."/>
            <person name="Xu J."/>
            <person name="Zhou Y."/>
            <person name="Yu Y."/>
            <person name="Zhang B."/>
            <person name="Zhuang S."/>
            <person name="Wei H."/>
            <person name="Liu B."/>
            <person name="Lei M."/>
            <person name="Yu H."/>
            <person name="Li Y."/>
            <person name="Xu H."/>
            <person name="Wei S."/>
            <person name="He X."/>
            <person name="Fang L."/>
            <person name="Zhang Z."/>
            <person name="Zhang Y."/>
            <person name="Huang X."/>
            <person name="Su Z."/>
            <person name="Tong W."/>
            <person name="Li J."/>
            <person name="Tong Z."/>
            <person name="Li S."/>
            <person name="Ye J."/>
            <person name="Wang L."/>
            <person name="Fang L."/>
            <person name="Lei T."/>
            <person name="Chen C.-S."/>
            <person name="Chen H.-C."/>
            <person name="Xu Z."/>
            <person name="Li H."/>
            <person name="Huang H."/>
            <person name="Zhang F."/>
            <person name="Xu H."/>
            <person name="Li N."/>
            <person name="Zhao C."/>
            <person name="Li S."/>
            <person name="Dong L."/>
            <person name="Huang Y."/>
            <person name="Li L."/>
            <person name="Xi Y."/>
            <person name="Qi Q."/>
            <person name="Li W."/>
            <person name="Zhang B."/>
            <person name="Hu W."/>
            <person name="Zhang Y."/>
            <person name="Tian X."/>
            <person name="Jiao Y."/>
            <person name="Liang X."/>
            <person name="Jin J."/>
            <person name="Gao L."/>
            <person name="Zheng W."/>
            <person name="Hao B."/>
            <person name="Liu S.-M."/>
            <person name="Wang W."/>
            <person name="Yuan L."/>
            <person name="Cao M."/>
            <person name="McDermott J."/>
            <person name="Samudrala R."/>
            <person name="Wang J."/>
            <person name="Wong G.K.-S."/>
            <person name="Yang H."/>
        </authorList>
    </citation>
    <scope>NUCLEOTIDE SEQUENCE [LARGE SCALE GENOMIC DNA]</scope>
    <source>
        <strain>cv. Nipponbare</strain>
    </source>
</reference>
<reference key="6">
    <citation type="journal article" date="2008" name="Mol. Plant">
        <title>The receptor-like cytoplasmic kinase (OsRLCK) gene family in rice: organization, phylogenetic relationship, and expression during development and stress.</title>
        <authorList>
            <person name="Vij S."/>
            <person name="Giri J."/>
            <person name="Dansana P.K."/>
            <person name="Kapoor S."/>
            <person name="Tyagi A.K."/>
        </authorList>
    </citation>
    <scope>GENE FAMILY</scope>
    <scope>NOMENCLATURE</scope>
</reference>
<reference key="7">
    <citation type="journal article" date="2016" name="Plant Physiol.">
        <title>OsBRI1 activates BR signaling by preventing binding between the TPR and kinase domains of OsBSK3 via phosphorylation.</title>
        <authorList>
            <person name="Zhang B."/>
            <person name="Wang X."/>
            <person name="Zhao Z."/>
            <person name="Wang R."/>
            <person name="Huang X."/>
            <person name="Zhu Y."/>
            <person name="Yuan L."/>
            <person name="Wang Y."/>
            <person name="Xu X."/>
            <person name="Burlingame A.L."/>
            <person name="Gao Y."/>
            <person name="Sun Y."/>
            <person name="Tang W."/>
        </authorList>
    </citation>
    <scope>FUNCTION</scope>
    <scope>IDENTIFICATION BY MASS SPECTROMETRY</scope>
    <scope>INTERACTION WITH BRI1 AND BSL1</scope>
    <scope>SUBCELLULAR LOCATION</scope>
    <scope>INDUCTION BY 24-EPIBRASSINOLIDE</scope>
    <scope>MYRISTOYLATION AT GLY-2</scope>
    <scope>PHOSPHORYLATION AT SER-213 AND SER-215</scope>
    <scope>MUTAGENESIS OF 2-GLY-GLY-3; SER-213 AND SER-215</scope>
</reference>
<feature type="initiator methionine" description="Removed" evidence="7">
    <location>
        <position position="1"/>
    </location>
</feature>
<feature type="chain" id="PRO_0000439010" description="Probable serine/threonine-protein kinase BSK3">
    <location>
        <begin position="2"/>
        <end position="494"/>
    </location>
</feature>
<feature type="domain" description="Protein kinase" evidence="1">
    <location>
        <begin position="61"/>
        <end position="316"/>
    </location>
</feature>
<feature type="repeat" description="TPR" evidence="2">
    <location>
        <begin position="423"/>
        <end position="456"/>
    </location>
</feature>
<feature type="active site" description="Proton acceptor" evidence="1">
    <location>
        <position position="183"/>
    </location>
</feature>
<feature type="binding site" evidence="1">
    <location>
        <begin position="67"/>
        <end position="75"/>
    </location>
    <ligand>
        <name>ATP</name>
        <dbReference type="ChEBI" id="CHEBI:30616"/>
    </ligand>
</feature>
<feature type="binding site" evidence="1">
    <location>
        <position position="89"/>
    </location>
    <ligand>
        <name>ATP</name>
        <dbReference type="ChEBI" id="CHEBI:30616"/>
    </ligand>
</feature>
<feature type="modified residue" description="Phosphoserine" evidence="3">
    <location>
        <position position="213"/>
    </location>
</feature>
<feature type="modified residue" description="Phosphoserine" evidence="3">
    <location>
        <position position="215"/>
    </location>
</feature>
<feature type="lipid moiety-binding region" description="N-myristoyl glycine" evidence="7">
    <location>
        <position position="2"/>
    </location>
</feature>
<feature type="mutagenesis site" description="Loss of plasma membrane localization." evidence="3">
    <original>GG</original>
    <variation>AA</variation>
    <location>
        <begin position="2"/>
        <end position="3"/>
    </location>
</feature>
<feature type="mutagenesis site" description="No effect on its function in the regulation of brassinosteroid signaling." evidence="3">
    <original>S</original>
    <variation>A</variation>
    <location>
        <position position="213"/>
    </location>
</feature>
<feature type="mutagenesis site" description="No effect on its function in the regulation of brassinosteroid signaling.">
    <original>S</original>
    <variation>E</variation>
    <location>
        <position position="213"/>
    </location>
</feature>
<feature type="mutagenesis site" description="Loss of its function in the regulation of brassinosteroid signaling." evidence="3">
    <original>S</original>
    <variation>A</variation>
    <location>
        <position position="215"/>
    </location>
</feature>
<feature type="mutagenesis site" description="Constitutively active in its function in the regulation of brassinosteroid signaling; increases binding affinity for BSL1." evidence="3">
    <original>S</original>
    <variation>E</variation>
    <location>
        <position position="215"/>
    </location>
</feature>
<comment type="function">
    <text evidence="3">Probable serine/threonine kinase that acts as a positive regulator of brassinosteroid (BR) signaling downstream of BRI1.</text>
</comment>
<comment type="catalytic activity">
    <reaction evidence="6">
        <text>L-seryl-[protein] + ATP = O-phospho-L-seryl-[protein] + ADP + H(+)</text>
        <dbReference type="Rhea" id="RHEA:17989"/>
        <dbReference type="Rhea" id="RHEA-COMP:9863"/>
        <dbReference type="Rhea" id="RHEA-COMP:11604"/>
        <dbReference type="ChEBI" id="CHEBI:15378"/>
        <dbReference type="ChEBI" id="CHEBI:29999"/>
        <dbReference type="ChEBI" id="CHEBI:30616"/>
        <dbReference type="ChEBI" id="CHEBI:83421"/>
        <dbReference type="ChEBI" id="CHEBI:456216"/>
        <dbReference type="EC" id="2.7.11.1"/>
    </reaction>
</comment>
<comment type="catalytic activity">
    <reaction evidence="6">
        <text>L-threonyl-[protein] + ATP = O-phospho-L-threonyl-[protein] + ADP + H(+)</text>
        <dbReference type="Rhea" id="RHEA:46608"/>
        <dbReference type="Rhea" id="RHEA-COMP:11060"/>
        <dbReference type="Rhea" id="RHEA-COMP:11605"/>
        <dbReference type="ChEBI" id="CHEBI:15378"/>
        <dbReference type="ChEBI" id="CHEBI:30013"/>
        <dbReference type="ChEBI" id="CHEBI:30616"/>
        <dbReference type="ChEBI" id="CHEBI:61977"/>
        <dbReference type="ChEBI" id="CHEBI:456216"/>
        <dbReference type="EC" id="2.7.11.1"/>
    </reaction>
</comment>
<comment type="subunit">
    <text evidence="3">Interacts with BRI1 and BSL1.</text>
</comment>
<comment type="subcellular location">
    <subcellularLocation>
        <location evidence="3">Cell membrane</location>
        <topology evidence="7">Lipid-anchor</topology>
    </subcellularLocation>
    <text evidence="3">Plasma membrane localization is required for its function in the regulation of brassinosteroid signaling.</text>
</comment>
<comment type="induction">
    <text evidence="3">Induced by 24-epibrassinolide in roots and leaves.</text>
</comment>
<comment type="PTM">
    <text evidence="3">Phosphorylated at Ser-213 and Ser-215 by BRI1. Phosphorylation at Ser-215 is required for its function in the regulation of brassinosteroid signaling. Phosphorylation by BRI1 disrupts the interaction between its TPR and kinase domains, thereby increasing the binding between its kinase domain and BSL1.</text>
</comment>
<comment type="sequence caution" evidence="6">
    <conflict type="erroneous gene model prediction">
        <sequence resource="EMBL-CDS" id="BAF16222"/>
    </conflict>
</comment>
<comment type="sequence caution" evidence="6">
    <conflict type="erroneous gene model prediction">
        <sequence resource="EMBL-CDS" id="BAS91713"/>
    </conflict>
</comment>
<comment type="sequence caution" evidence="6">
    <conflict type="erroneous gene model prediction">
        <sequence resource="EMBL-CDS" id="CAE03448"/>
    </conflict>
</comment>
<gene>
    <name evidence="5" type="primary">BSK3</name>
    <name evidence="4" type="synonym">RLCK173</name>
    <name evidence="8" type="ordered locus">Os04g0684200</name>
    <name evidence="6" type="ordered locus">LOC_Os04g58750</name>
    <name evidence="10" type="ORF">OsJ_16683</name>
    <name evidence="9" type="ORF">OSJNBa0088H09.6</name>
</gene>
<name>BSK3_ORYSJ</name>
<protein>
    <recommendedName>
        <fullName evidence="6">Probable serine/threonine-protein kinase BSK3</fullName>
        <ecNumber evidence="6">2.7.11.1</ecNumber>
    </recommendedName>
    <alternativeName>
        <fullName evidence="6">Brassinosteroid-signaling kinase 3</fullName>
        <shortName evidence="5">OsBSK3</shortName>
    </alternativeName>
    <alternativeName>
        <fullName evidence="4">Receptor-like cytoplasmic kinase 173</fullName>
        <shortName evidence="4">OsRLCK173</shortName>
    </alternativeName>
</protein>
<sequence length="494" mass="55412">MGGRVSKAVACCCCRSQHHGVVVESSEKTAEEDHGESYELPAFQEFSFEQLRLATSGFAVENIVSEHGEKAPNVVYKGKLDAQRRIAVKRFNRSAWPDPRQFLEEAKSVGQLRSKRLANLLGCCCEGDERLLVAEYMPNDTLAKHLFHWEAQAMKWPMRLRVVLYLAEALEYCTSKGRALYHDLNAYRVLFDDDCNPRLSCFGLMKNSRDGKSYSTNLAFTPPEYMRTGRITPESVIYSFGTLLLDVLSGKHIPPSHALDLIRDRNFNMLTDSCLEGQFSNEEGTELVRLASRCLHYEPRERPNVRSLVQALAPLQKDLETPSYELMDIPRGGATSVQSLLLSPLAEACSRKDLTAIHEILEKTGYKDDEGTANELSFQMWTNQMQDTLNSKKKGDNAFRQKDFSSAIDCYSQFIEVGTMVSPTIYARRCLSYLMNDKAEQALSDAMQALVISPTWPTAFYLQAAALLSLGMENEAQEAIKDGCAHETSSSSGH</sequence>
<keyword id="KW-0067">ATP-binding</keyword>
<keyword id="KW-1003">Cell membrane</keyword>
<keyword id="KW-0418">Kinase</keyword>
<keyword id="KW-0449">Lipoprotein</keyword>
<keyword id="KW-0472">Membrane</keyword>
<keyword id="KW-0519">Myristate</keyword>
<keyword id="KW-0547">Nucleotide-binding</keyword>
<keyword id="KW-0597">Phosphoprotein</keyword>
<keyword id="KW-1185">Reference proteome</keyword>
<keyword id="KW-0723">Serine/threonine-protein kinase</keyword>
<keyword id="KW-0802">TPR repeat</keyword>
<keyword id="KW-0808">Transferase</keyword>
<proteinExistence type="evidence at protein level"/>
<dbReference type="EC" id="2.7.11.1" evidence="6"/>
<dbReference type="EMBL" id="AL606651">
    <property type="protein sequence ID" value="CAE03448.1"/>
    <property type="status" value="ALT_SEQ"/>
    <property type="molecule type" value="Genomic_DNA"/>
</dbReference>
<dbReference type="EMBL" id="AP008210">
    <property type="protein sequence ID" value="BAF16222.2"/>
    <property type="status" value="ALT_SEQ"/>
    <property type="molecule type" value="Genomic_DNA"/>
</dbReference>
<dbReference type="EMBL" id="AP014960">
    <property type="protein sequence ID" value="BAS91713.1"/>
    <property type="status" value="ALT_SEQ"/>
    <property type="molecule type" value="Genomic_DNA"/>
</dbReference>
<dbReference type="EMBL" id="CM000141">
    <property type="protein sequence ID" value="EEE61937.1"/>
    <property type="molecule type" value="Genomic_DNA"/>
</dbReference>
<dbReference type="SMR" id="B9FDE0"/>
<dbReference type="FunCoup" id="B9FDE0">
    <property type="interactions" value="1959"/>
</dbReference>
<dbReference type="STRING" id="39947.B9FDE0"/>
<dbReference type="iPTMnet" id="B9FDE0"/>
<dbReference type="PaxDb" id="39947-B9FDE0"/>
<dbReference type="KEGG" id="dosa:Os04g0684200"/>
<dbReference type="eggNOG" id="ENOG502QSE9">
    <property type="taxonomic scope" value="Eukaryota"/>
</dbReference>
<dbReference type="InParanoid" id="B9FDE0"/>
<dbReference type="Proteomes" id="UP000000763">
    <property type="component" value="Chromosome 4"/>
</dbReference>
<dbReference type="Proteomes" id="UP000007752">
    <property type="component" value="Chromosome 4"/>
</dbReference>
<dbReference type="Proteomes" id="UP000059680">
    <property type="component" value="Chromosome 4"/>
</dbReference>
<dbReference type="GO" id="GO:0005886">
    <property type="term" value="C:plasma membrane"/>
    <property type="evidence" value="ECO:0000314"/>
    <property type="project" value="UniProtKB"/>
</dbReference>
<dbReference type="GO" id="GO:0005524">
    <property type="term" value="F:ATP binding"/>
    <property type="evidence" value="ECO:0007669"/>
    <property type="project" value="UniProtKB-KW"/>
</dbReference>
<dbReference type="GO" id="GO:0106310">
    <property type="term" value="F:protein serine kinase activity"/>
    <property type="evidence" value="ECO:0007669"/>
    <property type="project" value="RHEA"/>
</dbReference>
<dbReference type="GO" id="GO:0004674">
    <property type="term" value="F:protein serine/threonine kinase activity"/>
    <property type="evidence" value="ECO:0007669"/>
    <property type="project" value="UniProtKB-KW"/>
</dbReference>
<dbReference type="GO" id="GO:0009742">
    <property type="term" value="P:brassinosteroid mediated signaling pathway"/>
    <property type="evidence" value="ECO:0000318"/>
    <property type="project" value="GO_Central"/>
</dbReference>
<dbReference type="GO" id="GO:1900459">
    <property type="term" value="P:positive regulation of brassinosteroid mediated signaling pathway"/>
    <property type="evidence" value="ECO:0000315"/>
    <property type="project" value="UniProtKB"/>
</dbReference>
<dbReference type="FunFam" id="1.25.40.10:FF:000016">
    <property type="entry name" value="probable serine/threonine-protein kinase At4g35230"/>
    <property type="match status" value="1"/>
</dbReference>
<dbReference type="FunFam" id="3.30.200.20:FF:000154">
    <property type="entry name" value="probable serine/threonine-protein kinase At4g35230"/>
    <property type="match status" value="1"/>
</dbReference>
<dbReference type="FunFam" id="1.10.510.10:FF:000069">
    <property type="entry name" value="probable serine/threonine-protein kinase At5g41260"/>
    <property type="match status" value="1"/>
</dbReference>
<dbReference type="Gene3D" id="3.30.200.20">
    <property type="entry name" value="Phosphorylase Kinase, domain 1"/>
    <property type="match status" value="1"/>
</dbReference>
<dbReference type="Gene3D" id="1.25.40.10">
    <property type="entry name" value="Tetratricopeptide repeat domain"/>
    <property type="match status" value="1"/>
</dbReference>
<dbReference type="Gene3D" id="1.10.510.10">
    <property type="entry name" value="Transferase(Phosphotransferase) domain 1"/>
    <property type="match status" value="1"/>
</dbReference>
<dbReference type="InterPro" id="IPR045845">
    <property type="entry name" value="BSK"/>
</dbReference>
<dbReference type="InterPro" id="IPR011009">
    <property type="entry name" value="Kinase-like_dom_sf"/>
</dbReference>
<dbReference type="InterPro" id="IPR000719">
    <property type="entry name" value="Prot_kinase_dom"/>
</dbReference>
<dbReference type="InterPro" id="IPR001245">
    <property type="entry name" value="Ser-Thr/Tyr_kinase_cat_dom"/>
</dbReference>
<dbReference type="InterPro" id="IPR011990">
    <property type="entry name" value="TPR-like_helical_dom_sf"/>
</dbReference>
<dbReference type="PANTHER" id="PTHR45863">
    <property type="entry name" value="SERINE/THREONINE-PROTEIN KINASE BSK5"/>
    <property type="match status" value="1"/>
</dbReference>
<dbReference type="PANTHER" id="PTHR45863:SF47">
    <property type="entry name" value="SERINE_THREONINE-PROTEIN KINASE BSK3"/>
    <property type="match status" value="1"/>
</dbReference>
<dbReference type="Pfam" id="PF07714">
    <property type="entry name" value="PK_Tyr_Ser-Thr"/>
    <property type="match status" value="1"/>
</dbReference>
<dbReference type="SUPFAM" id="SSF56112">
    <property type="entry name" value="Protein kinase-like (PK-like)"/>
    <property type="match status" value="1"/>
</dbReference>
<dbReference type="SUPFAM" id="SSF48452">
    <property type="entry name" value="TPR-like"/>
    <property type="match status" value="1"/>
</dbReference>
<dbReference type="PROSITE" id="PS50011">
    <property type="entry name" value="PROTEIN_KINASE_DOM"/>
    <property type="match status" value="1"/>
</dbReference>
<evidence type="ECO:0000255" key="1">
    <source>
        <dbReference type="PROSITE-ProRule" id="PRU00159"/>
    </source>
</evidence>
<evidence type="ECO:0000255" key="2">
    <source>
        <dbReference type="PROSITE-ProRule" id="PRU00339"/>
    </source>
</evidence>
<evidence type="ECO:0000269" key="3">
    <source>
    </source>
</evidence>
<evidence type="ECO:0000303" key="4">
    <source>
    </source>
</evidence>
<evidence type="ECO:0000303" key="5">
    <source>
    </source>
</evidence>
<evidence type="ECO:0000305" key="6"/>
<evidence type="ECO:0000305" key="7">
    <source>
    </source>
</evidence>
<evidence type="ECO:0000312" key="8">
    <source>
        <dbReference type="EMBL" id="BAS91713.1"/>
    </source>
</evidence>
<evidence type="ECO:0000312" key="9">
    <source>
        <dbReference type="EMBL" id="CAE03448.1"/>
    </source>
</evidence>
<evidence type="ECO:0000312" key="10">
    <source>
        <dbReference type="EMBL" id="EEE61937.1"/>
    </source>
</evidence>
<organism>
    <name type="scientific">Oryza sativa subsp. japonica</name>
    <name type="common">Rice</name>
    <dbReference type="NCBI Taxonomy" id="39947"/>
    <lineage>
        <taxon>Eukaryota</taxon>
        <taxon>Viridiplantae</taxon>
        <taxon>Streptophyta</taxon>
        <taxon>Embryophyta</taxon>
        <taxon>Tracheophyta</taxon>
        <taxon>Spermatophyta</taxon>
        <taxon>Magnoliopsida</taxon>
        <taxon>Liliopsida</taxon>
        <taxon>Poales</taxon>
        <taxon>Poaceae</taxon>
        <taxon>BOP clade</taxon>
        <taxon>Oryzoideae</taxon>
        <taxon>Oryzeae</taxon>
        <taxon>Oryzinae</taxon>
        <taxon>Oryza</taxon>
        <taxon>Oryza sativa</taxon>
    </lineage>
</organism>
<accession>B9FDE0</accession>
<accession>A0A0N7KJY5</accession>
<accession>Q0J8W5</accession>
<accession>Q7XPV0</accession>